<sequence length="179" mass="19682">MGITAGKSVLVLLAFLAFASCCYAAYRPSETLCGGELVDTLQFVCGDRGFYFSRPSSRINRRSRGIVEECCFRSCDLALLETYCATPAKSERDVSASTTVLPDDVTAYPVGKFFQYDIWKQSTQRLRRGLPAFLRARRGRTLAKELEALREAKSHRPLIALPTQDPATHGGASSKASSD</sequence>
<organism>
    <name type="scientific">Bos taurus</name>
    <name type="common">Bovine</name>
    <dbReference type="NCBI Taxonomy" id="9913"/>
    <lineage>
        <taxon>Eukaryota</taxon>
        <taxon>Metazoa</taxon>
        <taxon>Chordata</taxon>
        <taxon>Craniata</taxon>
        <taxon>Vertebrata</taxon>
        <taxon>Euteleostomi</taxon>
        <taxon>Mammalia</taxon>
        <taxon>Eutheria</taxon>
        <taxon>Laurasiatheria</taxon>
        <taxon>Artiodactyla</taxon>
        <taxon>Ruminantia</taxon>
        <taxon>Pecora</taxon>
        <taxon>Bovidae</taxon>
        <taxon>Bovinae</taxon>
        <taxon>Bos</taxon>
    </lineage>
</organism>
<gene>
    <name evidence="9" type="primary">IGF2</name>
    <name evidence="11" type="synonym">IGF-2</name>
</gene>
<name>IGF2_BOVIN</name>
<protein>
    <recommendedName>
        <fullName evidence="2">Insulin-like growth factor 2</fullName>
    </recommendedName>
    <alternativeName>
        <fullName evidence="8">Erythrotropin</fullName>
    </alternativeName>
    <alternativeName>
        <fullName evidence="10">Insulin-like growth factor II</fullName>
        <shortName evidence="10">IGF-II</shortName>
    </alternativeName>
    <component>
        <recommendedName>
            <fullName evidence="2">Preptin</fullName>
        </recommendedName>
    </component>
</protein>
<feature type="signal peptide" evidence="6 7">
    <location>
        <begin position="1"/>
        <end position="24"/>
    </location>
</feature>
<feature type="chain" id="PRO_0000015711" description="Insulin-like growth factor 2">
    <location>
        <begin position="25"/>
        <end position="91"/>
    </location>
</feature>
<feature type="propeptide" id="PRO_0000015712" description="E peptide">
    <location>
        <begin position="92"/>
        <end position="179"/>
    </location>
</feature>
<feature type="peptide" id="PRO_0000370373" description="Preptin">
    <location>
        <begin position="93"/>
        <end position="126"/>
    </location>
</feature>
<feature type="region of interest" description="B">
    <location>
        <begin position="25"/>
        <end position="52"/>
    </location>
</feature>
<feature type="region of interest" description="C">
    <location>
        <begin position="53"/>
        <end position="64"/>
    </location>
</feature>
<feature type="region of interest" description="A">
    <location>
        <begin position="65"/>
        <end position="85"/>
    </location>
</feature>
<feature type="region of interest" description="D">
    <location>
        <begin position="86"/>
        <end position="91"/>
    </location>
</feature>
<feature type="region of interest" description="Disordered" evidence="4">
    <location>
        <begin position="160"/>
        <end position="179"/>
    </location>
</feature>
<feature type="site" description="Important for interaction with integrin" evidence="2">
    <location>
        <position position="48"/>
    </location>
</feature>
<feature type="site" description="Important for interaction with integrin" evidence="2">
    <location>
        <position position="58"/>
    </location>
</feature>
<feature type="site" description="Important for interaction with integrin" evidence="2">
    <location>
        <position position="61"/>
    </location>
</feature>
<feature type="site" description="Important for interaction with integrin" evidence="2">
    <location>
        <position position="62"/>
    </location>
</feature>
<feature type="glycosylation site" description="O-linked (GalNAc...) threonine" evidence="5">
    <location>
        <position position="106"/>
    </location>
</feature>
<feature type="glycosylation site" description="O-linked (GalNAc...) serine" evidence="5">
    <location>
        <position position="154"/>
    </location>
</feature>
<feature type="glycosylation site" description="O-linked (GalNAc...) threonine" evidence="5">
    <location>
        <position position="163"/>
    </location>
</feature>
<feature type="disulfide bond" evidence="1">
    <location>
        <begin position="33"/>
        <end position="71"/>
    </location>
</feature>
<feature type="disulfide bond" evidence="1">
    <location>
        <begin position="45"/>
        <end position="84"/>
    </location>
</feature>
<feature type="disulfide bond" evidence="1">
    <location>
        <begin position="70"/>
        <end position="75"/>
    </location>
</feature>
<feature type="sequence conflict" description="In Ref. 5; AA sequence." evidence="11" ref="5">
    <original>GD</original>
    <variation>DG</variation>
    <location>
        <begin position="46"/>
        <end position="47"/>
    </location>
</feature>
<feature type="sequence conflict" description="In Ref. 1; ABD34310." evidence="11" ref="1">
    <original>R</original>
    <variation>L</variation>
    <location>
        <position position="58"/>
    </location>
</feature>
<feature type="sequence conflict" description="In Ref. 3; AA sequence." evidence="11" ref="3">
    <original>I</original>
    <variation>S</variation>
    <location>
        <position position="59"/>
    </location>
</feature>
<feature type="sequence conflict" description="In Ref. 6; CAA37620." evidence="11" ref="6">
    <original>T</original>
    <variation>I</variation>
    <location>
        <position position="168"/>
    </location>
</feature>
<evidence type="ECO:0000250" key="1"/>
<evidence type="ECO:0000250" key="2">
    <source>
        <dbReference type="UniProtKB" id="P01344"/>
    </source>
</evidence>
<evidence type="ECO:0000250" key="3">
    <source>
        <dbReference type="UniProtKB" id="P09535"/>
    </source>
</evidence>
<evidence type="ECO:0000256" key="4">
    <source>
        <dbReference type="SAM" id="MobiDB-lite"/>
    </source>
</evidence>
<evidence type="ECO:0000269" key="5">
    <source>
    </source>
</evidence>
<evidence type="ECO:0000269" key="6">
    <source>
    </source>
</evidence>
<evidence type="ECO:0000269" key="7">
    <source>
    </source>
</evidence>
<evidence type="ECO:0000303" key="8">
    <source>
    </source>
</evidence>
<evidence type="ECO:0000303" key="9">
    <source>
    </source>
</evidence>
<evidence type="ECO:0000303" key="10">
    <source>
    </source>
</evidence>
<evidence type="ECO:0000305" key="11"/>
<comment type="function">
    <text evidence="2 3">The insulin-like growth factors possess growth-promoting activity (By similarity). Major fetal growth hormone in mammals. Plays a key role in regulating fetoplacental development. IGF2 is influenced by placental lactogen. Also involved in tissue differentiation. In adults, involved in glucose metabolism in adipose tissue, skeletal muscle and liver. Acts as a ligand for integrin which is required for IGF2 signaling. Positively regulates myogenic transcription factor MYOD1 function by facilitating the recruitment of transcriptional coactivators, thereby controlling muscle terminal differentiation (By similarity). Inhibits myoblast differentiation and modulates metabolism via increasing the mitochondrial respiration rate (By similarity).</text>
</comment>
<comment type="function">
    <text evidence="2 3">Preptin undergoes glucose-mediated co-secretion with insulin, and acts as a physiological amplifier of glucose-mediated insulin secretion. Exhibits osteogenic properties by increasing osteoblast mitogenic activity through phosphoactivation of MAPK1 and MAPK3.</text>
</comment>
<comment type="subunit">
    <text evidence="2 3">Interacts with MYORG; this interaction is required for IGF2 secretion. Interacts with integrins ITGAV:ITGB3 and ITGA6:ITGB4; integrin-binding is required for IGF2 signaling. Interacts with IGFBP2.</text>
</comment>
<comment type="subcellular location">
    <subcellularLocation>
        <location evidence="2 3">Secreted</location>
    </subcellularLocation>
</comment>
<comment type="PTM">
    <text evidence="2">Proteolytically processed by PCSK4, proIGF2 is cleaved at Arg-128 and Arg-92 to generate big-IGF2 and mature IGF2.</text>
</comment>
<comment type="miscellaneous">
    <text evidence="3">The IGF2 locus is imprinted. Paternal inherited gene is expressed, while the maternal inherited gene is imprinted, hence silenced.</text>
</comment>
<comment type="similarity">
    <text evidence="11">Belongs to the insulin family.</text>
</comment>
<reference key="1">
    <citation type="journal article" date="2005" name="Biol. Reprod.">
        <title>Promoter-specific expression of the imprinted IGF2 gene in cattle (Bos taurus).</title>
        <authorList>
            <person name="Curchoe C."/>
            <person name="Zhang S."/>
            <person name="Bin Y."/>
            <person name="Zhang X."/>
            <person name="Yang L."/>
            <person name="Feng D."/>
            <person name="O'Neill M."/>
            <person name="Tian X.C."/>
        </authorList>
    </citation>
    <scope>NUCLEOTIDE SEQUENCE [MRNA]</scope>
</reference>
<reference key="2">
    <citation type="submission" date="2006-05" db="EMBL/GenBank/DDBJ databases">
        <authorList>
            <consortium name="NIH - Mammalian Gene Collection (MGC) project"/>
        </authorList>
    </citation>
    <scope>NUCLEOTIDE SEQUENCE [LARGE SCALE MRNA]</scope>
    <source>
        <strain>Hereford</strain>
        <tissue>Ascending colon</tissue>
    </source>
</reference>
<reference key="3">
    <citation type="journal article" date="1986" name="J. Biol. Chem.">
        <title>Insulin-like growth factors I and II in fetal and adult bovine serum. Purification, primary structures, and immunological cross-reactivities.</title>
        <authorList>
            <person name="Honegger A."/>
            <person name="Humbel R.E."/>
        </authorList>
    </citation>
    <scope>PROTEIN SEQUENCE OF 25-91</scope>
</reference>
<reference key="4">
    <citation type="journal article" date="1988" name="Biochem. J.">
        <title>Insulin-like growth factors 1 and 2 in bovine colostrum. Sequences and biological activities compared with those of a potent truncated form.</title>
        <authorList>
            <person name="Francis G.L."/>
            <person name="Upton F.M."/>
            <person name="Ballard F.J."/>
            <person name="McNeil K.A."/>
            <person name="Wallace J.C."/>
        </authorList>
    </citation>
    <scope>SEQUENCE REVISION</scope>
</reference>
<reference key="5">
    <citation type="journal article" date="1990" name="Biochem. Biophys. Res. Commun.">
        <title>A heparin-binding erythroid cell stimulating factor from fetal bovine serum has the N-terminal sequence of insulin-like growth factor II.</title>
        <authorList>
            <person name="Li Q."/>
            <person name="Blacher R."/>
            <person name="Esch F."/>
            <person name="Congote L.F."/>
        </authorList>
    </citation>
    <scope>PROTEIN SEQUENCE OF 25-55</scope>
</reference>
<reference key="6">
    <citation type="journal article" date="1990" name="Nucleic Acids Res.">
        <title>The nucleotide and deduced amino acid sequences of insulin-like growth factor II cDNAs from adult bovine and fetal sheep liver.</title>
        <authorList>
            <person name="Brown W.M."/>
            <person name="Dziegielewska K.M."/>
            <person name="Foreman R.C."/>
            <person name="Saunders N.R."/>
        </authorList>
    </citation>
    <scope>NUCLEOTIDE SEQUENCE [MRNA] OF 30-179</scope>
    <source>
        <tissue>Liver</tissue>
    </source>
</reference>
<reference key="7">
    <citation type="journal article" date="1992" name="Comp. Biochem. Physiol.">
        <title>Nucleotide sequence of the central coding region of bovine erythrotropin/insulin-like growth factor II cDNA from fetal intestine and northern analysis of the major IGF II transcripts at the time of hepatic erythropoiesis.</title>
        <authorList>
            <person name="Congote L.F."/>
            <person name="Mazza L."/>
            <person name="Palfree R.G.E."/>
        </authorList>
    </citation>
    <scope>NUCLEOTIDE SEQUENCE [MRNA] OF 30-86</scope>
</reference>
<reference key="8">
    <citation type="journal article" date="2009" name="Mol. Cell. Proteomics">
        <title>Affinity enrichment and characterization of mucin core-1 type glycopeptides from bovine serum.</title>
        <authorList>
            <person name="Darula Z."/>
            <person name="Medzihradszky K.F."/>
        </authorList>
    </citation>
    <scope>GLYCOSYLATION AT THR-106; SER-154 AND THR-163</scope>
    <scope>IDENTIFICATION BY MASS SPECTROMETRY</scope>
</reference>
<keyword id="KW-0119">Carbohydrate metabolism</keyword>
<keyword id="KW-0165">Cleavage on pair of basic residues</keyword>
<keyword id="KW-0903">Direct protein sequencing</keyword>
<keyword id="KW-1015">Disulfide bond</keyword>
<keyword id="KW-0313">Glucose metabolism</keyword>
<keyword id="KW-0325">Glycoprotein</keyword>
<keyword id="KW-0339">Growth factor</keyword>
<keyword id="KW-0372">Hormone</keyword>
<keyword id="KW-0497">Mitogen</keyword>
<keyword id="KW-0892">Osteogenesis</keyword>
<keyword id="KW-1185">Reference proteome</keyword>
<keyword id="KW-0964">Secreted</keyword>
<keyword id="KW-0732">Signal</keyword>
<proteinExistence type="evidence at protein level"/>
<dbReference type="EMBL" id="AY957981">
    <property type="protein sequence ID" value="ABD34310.1"/>
    <property type="molecule type" value="mRNA"/>
</dbReference>
<dbReference type="EMBL" id="BC116039">
    <property type="protein sequence ID" value="AAI16040.1"/>
    <property type="molecule type" value="mRNA"/>
</dbReference>
<dbReference type="EMBL" id="X53553">
    <property type="protein sequence ID" value="CAA37620.1"/>
    <property type="molecule type" value="mRNA"/>
</dbReference>
<dbReference type="EMBL" id="X53867">
    <property type="protein sequence ID" value="CAA37861.1"/>
    <property type="molecule type" value="mRNA"/>
</dbReference>
<dbReference type="PIR" id="S10983">
    <property type="entry name" value="IGBO2"/>
</dbReference>
<dbReference type="RefSeq" id="NP_001354556.1">
    <property type="nucleotide sequence ID" value="NM_001367627.1"/>
</dbReference>
<dbReference type="RefSeq" id="NP_001354557.1">
    <property type="nucleotide sequence ID" value="NM_001367628.1"/>
</dbReference>
<dbReference type="RefSeq" id="NP_001354558.1">
    <property type="nucleotide sequence ID" value="NM_001367629.1"/>
</dbReference>
<dbReference type="RefSeq" id="NP_001354559.1">
    <property type="nucleotide sequence ID" value="NM_001367630.1"/>
</dbReference>
<dbReference type="RefSeq" id="NP_001354560.1">
    <property type="nucleotide sequence ID" value="NM_001367631.1"/>
</dbReference>
<dbReference type="RefSeq" id="NP_001354561.1">
    <property type="nucleotide sequence ID" value="NM_001367632.1"/>
</dbReference>
<dbReference type="RefSeq" id="NP_776512.2">
    <property type="nucleotide sequence ID" value="NM_174087.4"/>
</dbReference>
<dbReference type="RefSeq" id="XP_005227330.1">
    <property type="nucleotide sequence ID" value="XM_005227273.1"/>
</dbReference>
<dbReference type="RefSeq" id="XP_005227331.1">
    <property type="nucleotide sequence ID" value="XM_005227274.3"/>
</dbReference>
<dbReference type="RefSeq" id="XP_005227332.1">
    <property type="nucleotide sequence ID" value="XM_005227275.3"/>
</dbReference>
<dbReference type="RefSeq" id="XP_005227333.1">
    <property type="nucleotide sequence ID" value="XM_005227276.1"/>
</dbReference>
<dbReference type="RefSeq" id="XP_015316818.1">
    <property type="nucleotide sequence ID" value="XM_015461332.1"/>
</dbReference>
<dbReference type="SMR" id="P07456"/>
<dbReference type="FunCoup" id="P07456">
    <property type="interactions" value="447"/>
</dbReference>
<dbReference type="STRING" id="9913.ENSBTAP00000067141"/>
<dbReference type="GlyConnect" id="778">
    <property type="glycosylation" value="2 O-Linked glycans (3 sites)"/>
</dbReference>
<dbReference type="GlyCosmos" id="P07456">
    <property type="glycosylation" value="3 sites, 1 glycan"/>
</dbReference>
<dbReference type="GlyGen" id="P07456">
    <property type="glycosylation" value="3 sites, 1 O-linked glycan (2 sites)"/>
</dbReference>
<dbReference type="iPTMnet" id="P07456"/>
<dbReference type="PaxDb" id="9913-ENSBTAP00000017372"/>
<dbReference type="Ensembl" id="ENSBTAT00000017372.7">
    <property type="protein sequence ID" value="ENSBTAP00000017372.5"/>
    <property type="gene ID" value="ENSBTAG00000013066.7"/>
</dbReference>
<dbReference type="GeneID" id="281240"/>
<dbReference type="KEGG" id="bta:281240"/>
<dbReference type="CTD" id="3481"/>
<dbReference type="VEuPathDB" id="HostDB:ENSBTAG00000013066"/>
<dbReference type="VGNC" id="VGNC:30078">
    <property type="gene designation" value="IGF2"/>
</dbReference>
<dbReference type="eggNOG" id="ENOG502S0I0">
    <property type="taxonomic scope" value="Eukaryota"/>
</dbReference>
<dbReference type="GeneTree" id="ENSGT00940000160745"/>
<dbReference type="HOGENOM" id="CLU_092464_1_0_1"/>
<dbReference type="InParanoid" id="P07456"/>
<dbReference type="OMA" id="KVQRMCA"/>
<dbReference type="OrthoDB" id="9449995at2759"/>
<dbReference type="TreeFam" id="TF332820"/>
<dbReference type="Reactome" id="R-BTA-114608">
    <property type="pathway name" value="Platelet degranulation"/>
</dbReference>
<dbReference type="Reactome" id="R-BTA-2404192">
    <property type="pathway name" value="Signaling by Type 1 Insulin-like Growth Factor 1 Receptor (IGF1R)"/>
</dbReference>
<dbReference type="Reactome" id="R-BTA-2428928">
    <property type="pathway name" value="IRS-related events triggered by IGF1R"/>
</dbReference>
<dbReference type="Reactome" id="R-BTA-2428933">
    <property type="pathway name" value="SHC-related events triggered by IGF1R"/>
</dbReference>
<dbReference type="Reactome" id="R-BTA-381426">
    <property type="pathway name" value="Regulation of Insulin-like Growth Factor (IGF) transport and uptake by Insulin-like Growth Factor Binding Proteins (IGFBPs)"/>
</dbReference>
<dbReference type="Proteomes" id="UP000009136">
    <property type="component" value="Chromosome 29"/>
</dbReference>
<dbReference type="Bgee" id="ENSBTAG00000013066">
    <property type="expression patterns" value="Expressed in placenta and 104 other cell types or tissues"/>
</dbReference>
<dbReference type="GO" id="GO:0005615">
    <property type="term" value="C:extracellular space"/>
    <property type="evidence" value="ECO:0000314"/>
    <property type="project" value="AgBase"/>
</dbReference>
<dbReference type="GO" id="GO:0008083">
    <property type="term" value="F:growth factor activity"/>
    <property type="evidence" value="ECO:0000318"/>
    <property type="project" value="GO_Central"/>
</dbReference>
<dbReference type="GO" id="GO:0005179">
    <property type="term" value="F:hormone activity"/>
    <property type="evidence" value="ECO:0007669"/>
    <property type="project" value="UniProtKB-KW"/>
</dbReference>
<dbReference type="GO" id="GO:0005159">
    <property type="term" value="F:insulin-like growth factor receptor binding"/>
    <property type="evidence" value="ECO:0000318"/>
    <property type="project" value="GO_Central"/>
</dbReference>
<dbReference type="GO" id="GO:0005178">
    <property type="term" value="F:integrin binding"/>
    <property type="evidence" value="ECO:0000250"/>
    <property type="project" value="UniProtKB"/>
</dbReference>
<dbReference type="GO" id="GO:0043539">
    <property type="term" value="F:protein serine/threonine kinase activator activity"/>
    <property type="evidence" value="ECO:0000318"/>
    <property type="project" value="GO_Central"/>
</dbReference>
<dbReference type="GO" id="GO:0001892">
    <property type="term" value="P:embryonic placenta development"/>
    <property type="evidence" value="ECO:0000250"/>
    <property type="project" value="UniProtKB"/>
</dbReference>
<dbReference type="GO" id="GO:0060669">
    <property type="term" value="P:embryonic placenta morphogenesis"/>
    <property type="evidence" value="ECO:0000250"/>
    <property type="project" value="UniProtKB"/>
</dbReference>
<dbReference type="GO" id="GO:0006006">
    <property type="term" value="P:glucose metabolic process"/>
    <property type="evidence" value="ECO:0007669"/>
    <property type="project" value="UniProtKB-KW"/>
</dbReference>
<dbReference type="GO" id="GO:0001701">
    <property type="term" value="P:in utero embryonic development"/>
    <property type="evidence" value="ECO:0000250"/>
    <property type="project" value="UniProtKB"/>
</dbReference>
<dbReference type="GO" id="GO:0051148">
    <property type="term" value="P:negative regulation of muscle cell differentiation"/>
    <property type="evidence" value="ECO:0000250"/>
    <property type="project" value="UniProtKB"/>
</dbReference>
<dbReference type="GO" id="GO:0000122">
    <property type="term" value="P:negative regulation of transcription by RNA polymerase II"/>
    <property type="evidence" value="ECO:0000250"/>
    <property type="project" value="UniProtKB"/>
</dbReference>
<dbReference type="GO" id="GO:0001503">
    <property type="term" value="P:ossification"/>
    <property type="evidence" value="ECO:0007669"/>
    <property type="project" value="UniProtKB-KW"/>
</dbReference>
<dbReference type="GO" id="GO:0042104">
    <property type="term" value="P:positive regulation of activated T cell proliferation"/>
    <property type="evidence" value="ECO:0000318"/>
    <property type="project" value="GO_Central"/>
</dbReference>
<dbReference type="GO" id="GO:0051781">
    <property type="term" value="P:positive regulation of cell division"/>
    <property type="evidence" value="ECO:0007669"/>
    <property type="project" value="UniProtKB-KW"/>
</dbReference>
<dbReference type="GO" id="GO:0008284">
    <property type="term" value="P:positive regulation of cell population proliferation"/>
    <property type="evidence" value="ECO:0000250"/>
    <property type="project" value="UniProtKB"/>
</dbReference>
<dbReference type="GO" id="GO:0046628">
    <property type="term" value="P:positive regulation of insulin receptor signaling pathway"/>
    <property type="evidence" value="ECO:0000318"/>
    <property type="project" value="GO_Central"/>
</dbReference>
<dbReference type="GO" id="GO:0043410">
    <property type="term" value="P:positive regulation of MAPK cascade"/>
    <property type="evidence" value="ECO:0000318"/>
    <property type="project" value="GO_Central"/>
</dbReference>
<dbReference type="GO" id="GO:0045944">
    <property type="term" value="P:positive regulation of transcription by RNA polymerase II"/>
    <property type="evidence" value="ECO:0000318"/>
    <property type="project" value="GO_Central"/>
</dbReference>
<dbReference type="GO" id="GO:1905564">
    <property type="term" value="P:positive regulation of vascular endothelial cell proliferation"/>
    <property type="evidence" value="ECO:0000318"/>
    <property type="project" value="GO_Central"/>
</dbReference>
<dbReference type="GO" id="GO:0051147">
    <property type="term" value="P:regulation of muscle cell differentiation"/>
    <property type="evidence" value="ECO:0000250"/>
    <property type="project" value="UniProtKB"/>
</dbReference>
<dbReference type="GO" id="GO:0032868">
    <property type="term" value="P:response to insulin"/>
    <property type="evidence" value="ECO:0000314"/>
    <property type="project" value="AgBase"/>
</dbReference>
<dbReference type="CDD" id="cd04368">
    <property type="entry name" value="IlGF"/>
    <property type="match status" value="1"/>
</dbReference>
<dbReference type="FunFam" id="1.10.100.10:FF:000002">
    <property type="entry name" value="Insulin-like growth factor II preproprotein"/>
    <property type="match status" value="1"/>
</dbReference>
<dbReference type="Gene3D" id="1.10.100.10">
    <property type="entry name" value="Insulin-like"/>
    <property type="match status" value="1"/>
</dbReference>
<dbReference type="InterPro" id="IPR022334">
    <property type="entry name" value="IGF2"/>
</dbReference>
<dbReference type="InterPro" id="IPR013576">
    <property type="entry name" value="IGF2_C"/>
</dbReference>
<dbReference type="InterPro" id="IPR016179">
    <property type="entry name" value="Insulin-like"/>
</dbReference>
<dbReference type="InterPro" id="IPR022350">
    <property type="entry name" value="Insulin-like_growth_factor"/>
</dbReference>
<dbReference type="InterPro" id="IPR036438">
    <property type="entry name" value="Insulin-like_sf"/>
</dbReference>
<dbReference type="InterPro" id="IPR022353">
    <property type="entry name" value="Insulin_CS"/>
</dbReference>
<dbReference type="InterPro" id="IPR022352">
    <property type="entry name" value="Insulin_family"/>
</dbReference>
<dbReference type="PANTHER" id="PTHR46886">
    <property type="entry name" value="INSULIN-LIKE GROWTH FACTOR II"/>
    <property type="match status" value="1"/>
</dbReference>
<dbReference type="PANTHER" id="PTHR46886:SF1">
    <property type="entry name" value="INSULIN-LIKE GROWTH FACTOR II"/>
    <property type="match status" value="1"/>
</dbReference>
<dbReference type="Pfam" id="PF08365">
    <property type="entry name" value="IGF2_C"/>
    <property type="match status" value="1"/>
</dbReference>
<dbReference type="Pfam" id="PF00049">
    <property type="entry name" value="Insulin"/>
    <property type="match status" value="2"/>
</dbReference>
<dbReference type="PRINTS" id="PR02002">
    <property type="entry name" value="INSLNLIKEGF"/>
</dbReference>
<dbReference type="PRINTS" id="PR02006">
    <property type="entry name" value="INSLNLIKEGF2"/>
</dbReference>
<dbReference type="PRINTS" id="PR00276">
    <property type="entry name" value="INSULINFAMLY"/>
</dbReference>
<dbReference type="SMART" id="SM00078">
    <property type="entry name" value="IlGF"/>
    <property type="match status" value="1"/>
</dbReference>
<dbReference type="SUPFAM" id="SSF56994">
    <property type="entry name" value="Insulin-like"/>
    <property type="match status" value="1"/>
</dbReference>
<dbReference type="PROSITE" id="PS00262">
    <property type="entry name" value="INSULIN"/>
    <property type="match status" value="1"/>
</dbReference>
<accession>P07456</accession>
<accession>A0A5F2</accession>
<accession>Q2HJN0</accession>